<protein>
    <recommendedName>
        <fullName evidence="1">Gamma-glutamyl phosphate reductase</fullName>
        <shortName evidence="1">GPR</shortName>
        <ecNumber evidence="1">1.2.1.41</ecNumber>
    </recommendedName>
    <alternativeName>
        <fullName evidence="1">Glutamate-5-semialdehyde dehydrogenase</fullName>
    </alternativeName>
    <alternativeName>
        <fullName evidence="1">Glutamyl-gamma-semialdehyde dehydrogenase</fullName>
        <shortName evidence="1">GSA dehydrogenase</shortName>
    </alternativeName>
</protein>
<organism>
    <name type="scientific">Corynebacterium glutamicum (strain ATCC 13032 / DSM 20300 / JCM 1318 / BCRC 11384 / CCUG 27702 / LMG 3730 / NBRC 12168 / NCIMB 10025 / NRRL B-2784 / 534)</name>
    <dbReference type="NCBI Taxonomy" id="196627"/>
    <lineage>
        <taxon>Bacteria</taxon>
        <taxon>Bacillati</taxon>
        <taxon>Actinomycetota</taxon>
        <taxon>Actinomycetes</taxon>
        <taxon>Mycobacteriales</taxon>
        <taxon>Corynebacteriaceae</taxon>
        <taxon>Corynebacterium</taxon>
    </lineage>
</organism>
<proteinExistence type="inferred from homology"/>
<dbReference type="EC" id="1.2.1.41" evidence="1"/>
<dbReference type="EMBL" id="BA000036">
    <property type="protein sequence ID" value="BAB99747.1"/>
    <property type="molecule type" value="Genomic_DNA"/>
</dbReference>
<dbReference type="EMBL" id="BX927155">
    <property type="protein sequence ID" value="CAF21019.1"/>
    <property type="molecule type" value="Genomic_DNA"/>
</dbReference>
<dbReference type="RefSeq" id="NP_601555.1">
    <property type="nucleotide sequence ID" value="NC_003450.3"/>
</dbReference>
<dbReference type="RefSeq" id="WP_003859321.1">
    <property type="nucleotide sequence ID" value="NC_006958.1"/>
</dbReference>
<dbReference type="SMR" id="P0C1E0"/>
<dbReference type="STRING" id="196627.cg2586"/>
<dbReference type="KEGG" id="cgb:cg2586"/>
<dbReference type="KEGG" id="cgl:Cgl2354"/>
<dbReference type="PATRIC" id="fig|196627.13.peg.2290"/>
<dbReference type="eggNOG" id="COG0014">
    <property type="taxonomic scope" value="Bacteria"/>
</dbReference>
<dbReference type="HOGENOM" id="CLU_030231_0_0_11"/>
<dbReference type="OrthoDB" id="9809970at2"/>
<dbReference type="BioCyc" id="CORYNE:G18NG-11951-MONOMER"/>
<dbReference type="UniPathway" id="UPA00098">
    <property type="reaction ID" value="UER00360"/>
</dbReference>
<dbReference type="Proteomes" id="UP000000582">
    <property type="component" value="Chromosome"/>
</dbReference>
<dbReference type="Proteomes" id="UP000001009">
    <property type="component" value="Chromosome"/>
</dbReference>
<dbReference type="GO" id="GO:0005737">
    <property type="term" value="C:cytoplasm"/>
    <property type="evidence" value="ECO:0007669"/>
    <property type="project" value="UniProtKB-SubCell"/>
</dbReference>
<dbReference type="GO" id="GO:0004350">
    <property type="term" value="F:glutamate-5-semialdehyde dehydrogenase activity"/>
    <property type="evidence" value="ECO:0007669"/>
    <property type="project" value="UniProtKB-UniRule"/>
</dbReference>
<dbReference type="GO" id="GO:0050661">
    <property type="term" value="F:NADP binding"/>
    <property type="evidence" value="ECO:0007669"/>
    <property type="project" value="InterPro"/>
</dbReference>
<dbReference type="GO" id="GO:0055129">
    <property type="term" value="P:L-proline biosynthetic process"/>
    <property type="evidence" value="ECO:0007669"/>
    <property type="project" value="UniProtKB-UniRule"/>
</dbReference>
<dbReference type="CDD" id="cd07079">
    <property type="entry name" value="ALDH_F18-19_ProA-GPR"/>
    <property type="match status" value="1"/>
</dbReference>
<dbReference type="Gene3D" id="3.40.605.10">
    <property type="entry name" value="Aldehyde Dehydrogenase, Chain A, domain 1"/>
    <property type="match status" value="1"/>
</dbReference>
<dbReference type="Gene3D" id="3.40.309.10">
    <property type="entry name" value="Aldehyde Dehydrogenase, Chain A, domain 2"/>
    <property type="match status" value="1"/>
</dbReference>
<dbReference type="HAMAP" id="MF_00412">
    <property type="entry name" value="ProA"/>
    <property type="match status" value="1"/>
</dbReference>
<dbReference type="InterPro" id="IPR016161">
    <property type="entry name" value="Ald_DH/histidinol_DH"/>
</dbReference>
<dbReference type="InterPro" id="IPR016163">
    <property type="entry name" value="Ald_DH_C"/>
</dbReference>
<dbReference type="InterPro" id="IPR016162">
    <property type="entry name" value="Ald_DH_N"/>
</dbReference>
<dbReference type="InterPro" id="IPR015590">
    <property type="entry name" value="Aldehyde_DH_dom"/>
</dbReference>
<dbReference type="InterPro" id="IPR020593">
    <property type="entry name" value="G-glutamylP_reductase_CS"/>
</dbReference>
<dbReference type="InterPro" id="IPR012134">
    <property type="entry name" value="Glu-5-SA_DH"/>
</dbReference>
<dbReference type="InterPro" id="IPR000965">
    <property type="entry name" value="GPR_dom"/>
</dbReference>
<dbReference type="NCBIfam" id="NF001221">
    <property type="entry name" value="PRK00197.1"/>
    <property type="match status" value="1"/>
</dbReference>
<dbReference type="NCBIfam" id="TIGR00407">
    <property type="entry name" value="proA"/>
    <property type="match status" value="1"/>
</dbReference>
<dbReference type="PANTHER" id="PTHR11063:SF8">
    <property type="entry name" value="DELTA-1-PYRROLINE-5-CARBOXYLATE SYNTHASE"/>
    <property type="match status" value="1"/>
</dbReference>
<dbReference type="PANTHER" id="PTHR11063">
    <property type="entry name" value="GLUTAMATE SEMIALDEHYDE DEHYDROGENASE"/>
    <property type="match status" value="1"/>
</dbReference>
<dbReference type="Pfam" id="PF00171">
    <property type="entry name" value="Aldedh"/>
    <property type="match status" value="1"/>
</dbReference>
<dbReference type="PIRSF" id="PIRSF000151">
    <property type="entry name" value="GPR"/>
    <property type="match status" value="1"/>
</dbReference>
<dbReference type="SUPFAM" id="SSF53720">
    <property type="entry name" value="ALDH-like"/>
    <property type="match status" value="1"/>
</dbReference>
<dbReference type="PROSITE" id="PS01223">
    <property type="entry name" value="PROA"/>
    <property type="match status" value="1"/>
</dbReference>
<keyword id="KW-0028">Amino-acid biosynthesis</keyword>
<keyword id="KW-0963">Cytoplasm</keyword>
<keyword id="KW-0521">NADP</keyword>
<keyword id="KW-0560">Oxidoreductase</keyword>
<keyword id="KW-0641">Proline biosynthesis</keyword>
<keyword id="KW-1185">Reference proteome</keyword>
<sequence length="432" mass="45667">MSSTTLTDDQIRDNERTEVLAKATAAKNIVPDIAVLGTGPKNAILRAAADELVARSAEIIEANASDIEAGRANGMEESMIDRLALDESRIEGIAGGLRQVAGLTDPVGEVLRGHVMENGIQMKQVRVPLGVMGMVYEARPNVTVDAFGLALKSGNVALLRGSSTAVHSNTKLVEILQDVLERFELPRETVQLLPCQTRGSVQDLITARGLVDVVIPRGGAGLINAVVTGATVPTIETGTGNCHFYIDAEAKLDQAIAMVINGKTRRCSVCNATETALLDAALSDSDKLAVVQALQEAGVTIHGRVAELEAFGATDVVEATETDWDSEYLSFDIAVAVVDGVDGALAHIAKYSTKHTEAIATQNIETAQRFADRVDAAAVMINASTAYTDGEQYGMGAEIGISTQKLHARGPMALPELTSTKWILQGTGQIRP</sequence>
<accession>P0C1E0</accession>
<accession>P45638</accession>
<evidence type="ECO:0000255" key="1">
    <source>
        <dbReference type="HAMAP-Rule" id="MF_00412"/>
    </source>
</evidence>
<reference key="1">
    <citation type="journal article" date="2003" name="Appl. Microbiol. Biotechnol.">
        <title>The Corynebacterium glutamicum genome: features and impacts on biotechnological processes.</title>
        <authorList>
            <person name="Ikeda M."/>
            <person name="Nakagawa S."/>
        </authorList>
    </citation>
    <scope>NUCLEOTIDE SEQUENCE [LARGE SCALE GENOMIC DNA]</scope>
    <source>
        <strain>ATCC 13032 / DSM 20300 / JCM 1318 / BCRC 11384 / CCUG 27702 / LMG 3730 / NBRC 12168 / NCIMB 10025 / NRRL B-2784 / 534</strain>
    </source>
</reference>
<reference key="2">
    <citation type="journal article" date="2003" name="J. Biotechnol.">
        <title>The complete Corynebacterium glutamicum ATCC 13032 genome sequence and its impact on the production of L-aspartate-derived amino acids and vitamins.</title>
        <authorList>
            <person name="Kalinowski J."/>
            <person name="Bathe B."/>
            <person name="Bartels D."/>
            <person name="Bischoff N."/>
            <person name="Bott M."/>
            <person name="Burkovski A."/>
            <person name="Dusch N."/>
            <person name="Eggeling L."/>
            <person name="Eikmanns B.J."/>
            <person name="Gaigalat L."/>
            <person name="Goesmann A."/>
            <person name="Hartmann M."/>
            <person name="Huthmacher K."/>
            <person name="Kraemer R."/>
            <person name="Linke B."/>
            <person name="McHardy A.C."/>
            <person name="Meyer F."/>
            <person name="Moeckel B."/>
            <person name="Pfefferle W."/>
            <person name="Puehler A."/>
            <person name="Rey D.A."/>
            <person name="Rueckert C."/>
            <person name="Rupp O."/>
            <person name="Sahm H."/>
            <person name="Wendisch V.F."/>
            <person name="Wiegraebe I."/>
            <person name="Tauch A."/>
        </authorList>
    </citation>
    <scope>NUCLEOTIDE SEQUENCE [LARGE SCALE GENOMIC DNA]</scope>
    <source>
        <strain>ATCC 13032 / DSM 20300 / JCM 1318 / BCRC 11384 / CCUG 27702 / LMG 3730 / NBRC 12168 / NCIMB 10025 / NRRL B-2784 / 534</strain>
    </source>
</reference>
<feature type="chain" id="PRO_0000189719" description="Gamma-glutamyl phosphate reductase">
    <location>
        <begin position="1"/>
        <end position="432"/>
    </location>
</feature>
<gene>
    <name evidence="1" type="primary">proA</name>
    <name type="ordered locus">Cgl2354</name>
    <name type="ordered locus">cg2586</name>
</gene>
<comment type="function">
    <text evidence="1">Catalyzes the NADPH-dependent reduction of L-glutamate 5-phosphate into L-glutamate 5-semialdehyde and phosphate. The product spontaneously undergoes cyclization to form 1-pyrroline-5-carboxylate.</text>
</comment>
<comment type="catalytic activity">
    <reaction evidence="1">
        <text>L-glutamate 5-semialdehyde + phosphate + NADP(+) = L-glutamyl 5-phosphate + NADPH + H(+)</text>
        <dbReference type="Rhea" id="RHEA:19541"/>
        <dbReference type="ChEBI" id="CHEBI:15378"/>
        <dbReference type="ChEBI" id="CHEBI:43474"/>
        <dbReference type="ChEBI" id="CHEBI:57783"/>
        <dbReference type="ChEBI" id="CHEBI:58066"/>
        <dbReference type="ChEBI" id="CHEBI:58274"/>
        <dbReference type="ChEBI" id="CHEBI:58349"/>
        <dbReference type="EC" id="1.2.1.41"/>
    </reaction>
</comment>
<comment type="pathway">
    <text evidence="1">Amino-acid biosynthesis; L-proline biosynthesis; L-glutamate 5-semialdehyde from L-glutamate: step 2/2.</text>
</comment>
<comment type="subcellular location">
    <subcellularLocation>
        <location evidence="1">Cytoplasm</location>
    </subcellularLocation>
</comment>
<comment type="similarity">
    <text evidence="1">Belongs to the gamma-glutamyl phosphate reductase family.</text>
</comment>
<name>PROA_CORGL</name>